<keyword id="KW-0044">Antibiotic</keyword>
<keyword id="KW-0929">Antimicrobial</keyword>
<keyword id="KW-0903">Direct protein sequencing</keyword>
<keyword id="KW-0391">Immunity</keyword>
<keyword id="KW-0399">Innate immunity</keyword>
<keyword id="KW-0964">Secreted</keyword>
<reference evidence="4" key="1">
    <citation type="journal article" date="1994" name="J. Biol. Chem.">
        <title>Biodiversity of apidaecin-type peptide antibiotics. Prospects of manipulating the antibacterial spectrum and combating acquired resistance.</title>
        <authorList>
            <person name="Casteels P."/>
            <person name="Romagnolo J."/>
            <person name="Castle M."/>
            <person name="Casteels-Josson K."/>
            <person name="Erdjument-Bromage H."/>
            <person name="Tempst P."/>
        </authorList>
    </citation>
    <scope>PROTEIN SEQUENCE</scope>
    <scope>FUNCTION</scope>
    <scope>SUBCELLULAR LOCATION</scope>
    <scope>INDUCTION</scope>
    <scope>MASS SPECTROMETRY</scope>
    <source>
        <tissue evidence="3">Hemolymph</tissue>
    </source>
</reference>
<protein>
    <recommendedName>
        <fullName evidence="3">Apidaecin 3+</fullName>
    </recommendedName>
    <component>
        <recommendedName>
            <fullName evidence="3">Apidaecin 3-</fullName>
        </recommendedName>
    </component>
</protein>
<accession>C0HKY0</accession>
<dbReference type="GO" id="GO:0005615">
    <property type="term" value="C:extracellular space"/>
    <property type="evidence" value="ECO:0000314"/>
    <property type="project" value="UniProtKB"/>
</dbReference>
<dbReference type="GO" id="GO:0050829">
    <property type="term" value="P:defense response to Gram-negative bacterium"/>
    <property type="evidence" value="ECO:0000314"/>
    <property type="project" value="UniProtKB"/>
</dbReference>
<dbReference type="GO" id="GO:0045087">
    <property type="term" value="P:innate immune response"/>
    <property type="evidence" value="ECO:0007669"/>
    <property type="project" value="UniProtKB-KW"/>
</dbReference>
<name>APD3_PIMDI</name>
<evidence type="ECO:0000256" key="1">
    <source>
        <dbReference type="SAM" id="MobiDB-lite"/>
    </source>
</evidence>
<evidence type="ECO:0000269" key="2">
    <source>
    </source>
</evidence>
<evidence type="ECO:0000303" key="3">
    <source>
    </source>
</evidence>
<evidence type="ECO:0000305" key="4"/>
<comment type="function">
    <text evidence="2">Antimicrobial peptide active against many Gram-negative enterobacterial and plant-associated bacterial species. Not active against other bacterial species like H.pylori, P.mirabilis, B.pertussis or N.gonorrhoeae.</text>
</comment>
<comment type="function">
    <molecule>Apidaecin 3+</molecule>
    <text evidence="2">Among others, also active against S.typhi.</text>
</comment>
<comment type="function">
    <molecule>Apidaecin 3-</molecule>
    <text evidence="2">Not active against S.typhi.</text>
</comment>
<comment type="subcellular location">
    <subcellularLocation>
        <location evidence="2">Secreted</location>
    </subcellularLocation>
</comment>
<comment type="induction">
    <text evidence="2">By bacterial infection.</text>
</comment>
<comment type="mass spectrometry">
    <molecule>Apidaecin 3+</molecule>
    <text>Apidaecin Cd 3+.</text>
</comment>
<comment type="mass spectrometry">
    <molecule>Apidaecin 3-</molecule>
    <text>Apidaecin Cd 3-.</text>
</comment>
<comment type="similarity">
    <text evidence="4">Belongs to the apidaecin family.</text>
</comment>
<organism evidence="3">
    <name type="scientific">Pimpla disparis</name>
    <name type="common">Parasitic wasp</name>
    <name type="synonym">Coccygomimus disparis</name>
    <dbReference type="NCBI Taxonomy" id="495387"/>
    <lineage>
        <taxon>Eukaryota</taxon>
        <taxon>Metazoa</taxon>
        <taxon>Ecdysozoa</taxon>
        <taxon>Arthropoda</taxon>
        <taxon>Hexapoda</taxon>
        <taxon>Insecta</taxon>
        <taxon>Pterygota</taxon>
        <taxon>Neoptera</taxon>
        <taxon>Endopterygota</taxon>
        <taxon>Hymenoptera</taxon>
        <taxon>Apocrita</taxon>
        <taxon>Ichneumonoidea</taxon>
        <taxon>Ichneumonidae</taxon>
        <taxon>Pimplinae</taxon>
        <taxon>Pimplini</taxon>
        <taxon>Pimpla</taxon>
    </lineage>
</organism>
<feature type="peptide" id="PRO_0000441351" description="Apidaecin 3+" evidence="2">
    <location>
        <begin position="1"/>
        <end position="20"/>
    </location>
</feature>
<feature type="peptide" id="PRO_0000441352" description="Apidaecin 3-" evidence="2">
    <location>
        <begin position="4"/>
        <end position="20"/>
    </location>
</feature>
<feature type="region of interest" description="Disordered" evidence="1">
    <location>
        <begin position="1"/>
        <end position="20"/>
    </location>
</feature>
<sequence>GKPSRPRPAPIQPRPPHPRL</sequence>
<proteinExistence type="evidence at protein level"/>